<accession>Q9KI47</accession>
<dbReference type="EC" id="3.2.1.23"/>
<dbReference type="EMBL" id="AF242542">
    <property type="protein sequence ID" value="AAF75984.1"/>
    <property type="molecule type" value="Genomic_DNA"/>
</dbReference>
<dbReference type="SMR" id="Q9KI47"/>
<dbReference type="CAZy" id="GH42">
    <property type="family name" value="Glycoside Hydrolase Family 42"/>
</dbReference>
<dbReference type="BRENDA" id="3.2.1.23">
    <property type="organism ID" value="4880"/>
</dbReference>
<dbReference type="GO" id="GO:0009341">
    <property type="term" value="C:beta-galactosidase complex"/>
    <property type="evidence" value="ECO:0007669"/>
    <property type="project" value="InterPro"/>
</dbReference>
<dbReference type="GO" id="GO:0004565">
    <property type="term" value="F:beta-galactosidase activity"/>
    <property type="evidence" value="ECO:0007669"/>
    <property type="project" value="UniProtKB-EC"/>
</dbReference>
<dbReference type="GO" id="GO:0046872">
    <property type="term" value="F:metal ion binding"/>
    <property type="evidence" value="ECO:0007669"/>
    <property type="project" value="UniProtKB-KW"/>
</dbReference>
<dbReference type="GO" id="GO:0006012">
    <property type="term" value="P:galactose metabolic process"/>
    <property type="evidence" value="ECO:0007669"/>
    <property type="project" value="InterPro"/>
</dbReference>
<dbReference type="CDD" id="cd03143">
    <property type="entry name" value="A4_beta-galactosidase_middle_domain"/>
    <property type="match status" value="1"/>
</dbReference>
<dbReference type="Gene3D" id="3.40.50.880">
    <property type="match status" value="1"/>
</dbReference>
<dbReference type="Gene3D" id="3.20.20.80">
    <property type="entry name" value="Glycosidases"/>
    <property type="match status" value="1"/>
</dbReference>
<dbReference type="Gene3D" id="2.60.40.1180">
    <property type="entry name" value="Golgi alpha-mannosidase II"/>
    <property type="match status" value="1"/>
</dbReference>
<dbReference type="InterPro" id="IPR013739">
    <property type="entry name" value="Beta_galactosidase_C"/>
</dbReference>
<dbReference type="InterPro" id="IPR013738">
    <property type="entry name" value="Beta_galactosidase_Trimer"/>
</dbReference>
<dbReference type="InterPro" id="IPR029062">
    <property type="entry name" value="Class_I_gatase-like"/>
</dbReference>
<dbReference type="InterPro" id="IPR003476">
    <property type="entry name" value="Glyco_hydro_42"/>
</dbReference>
<dbReference type="InterPro" id="IPR013529">
    <property type="entry name" value="Glyco_hydro_42_N"/>
</dbReference>
<dbReference type="InterPro" id="IPR013780">
    <property type="entry name" value="Glyco_hydro_b"/>
</dbReference>
<dbReference type="InterPro" id="IPR017853">
    <property type="entry name" value="Glycoside_hydrolase_SF"/>
</dbReference>
<dbReference type="PANTHER" id="PTHR36447">
    <property type="entry name" value="BETA-GALACTOSIDASE GANA"/>
    <property type="match status" value="1"/>
</dbReference>
<dbReference type="PANTHER" id="PTHR36447:SF1">
    <property type="entry name" value="BETA-GALACTOSIDASE GANA"/>
    <property type="match status" value="1"/>
</dbReference>
<dbReference type="Pfam" id="PF02449">
    <property type="entry name" value="Glyco_hydro_42"/>
    <property type="match status" value="1"/>
</dbReference>
<dbReference type="Pfam" id="PF08533">
    <property type="entry name" value="Glyco_hydro_42C"/>
    <property type="match status" value="1"/>
</dbReference>
<dbReference type="Pfam" id="PF08532">
    <property type="entry name" value="Glyco_hydro_42M"/>
    <property type="match status" value="1"/>
</dbReference>
<dbReference type="PIRSF" id="PIRSF001084">
    <property type="entry name" value="B-galactosidase"/>
    <property type="match status" value="1"/>
</dbReference>
<dbReference type="SUPFAM" id="SSF51445">
    <property type="entry name" value="(Trans)glycosidases"/>
    <property type="match status" value="1"/>
</dbReference>
<dbReference type="SUPFAM" id="SSF52317">
    <property type="entry name" value="Class I glutamine amidotransferase-like"/>
    <property type="match status" value="1"/>
</dbReference>
<keyword id="KW-0903">Direct protein sequencing</keyword>
<keyword id="KW-0326">Glycosidase</keyword>
<keyword id="KW-0378">Hydrolase</keyword>
<keyword id="KW-0479">Metal-binding</keyword>
<keyword id="KW-0862">Zinc</keyword>
<name>BGAL_PLASS</name>
<reference evidence="6 7" key="1">
    <citation type="journal article" date="2000" name="Appl. Environ. Microbiol.">
        <title>Characterization of a salt-tolerant family 42 beta-galactosidase from a psychrophilic antarctic Planococcus isolate.</title>
        <authorList>
            <person name="Sheridan P.P."/>
            <person name="Brenchley J.E."/>
        </authorList>
    </citation>
    <scope>NUCLEOTIDE SEQUENCE [GENOMIC DNA]</scope>
    <scope>PROTEIN SEQUENCE OF 1-8</scope>
    <scope>FUNCTION</scope>
    <scope>CATALYTIC ACTIVITY</scope>
    <scope>ACTIVITY REGULATION</scope>
    <scope>BIOPHYSICOCHEMICAL PROPERTIES</scope>
    <scope>SUBSTRATE SPECIFICITY</scope>
    <scope>SUBUNIT</scope>
    <scope>BIOTECHNOLOGY</scope>
    <source>
        <strain evidence="7">SOS Orange</strain>
    </source>
</reference>
<gene>
    <name evidence="5" type="primary">bgaA</name>
</gene>
<feature type="chain" id="PRO_0000407692" description="Beta-galactosidase BgaA">
    <location>
        <begin position="1"/>
        <end position="677"/>
    </location>
</feature>
<feature type="active site" description="Proton donor" evidence="1">
    <location>
        <position position="151"/>
    </location>
</feature>
<feature type="active site" description="Nucleophile" evidence="1">
    <location>
        <position position="309"/>
    </location>
</feature>
<feature type="binding site" evidence="1">
    <location>
        <position position="112"/>
    </location>
    <ligand>
        <name>substrate</name>
    </ligand>
</feature>
<feature type="binding site" evidence="1">
    <location>
        <position position="116"/>
    </location>
    <ligand>
        <name>Zn(2+)</name>
        <dbReference type="ChEBI" id="CHEBI:29105"/>
    </ligand>
</feature>
<feature type="binding site" evidence="1">
    <location>
        <position position="150"/>
    </location>
    <ligand>
        <name>substrate</name>
    </ligand>
</feature>
<feature type="binding site" evidence="1">
    <location>
        <position position="156"/>
    </location>
    <ligand>
        <name>Zn(2+)</name>
        <dbReference type="ChEBI" id="CHEBI:29105"/>
    </ligand>
</feature>
<feature type="binding site" evidence="1">
    <location>
        <position position="158"/>
    </location>
    <ligand>
        <name>Zn(2+)</name>
        <dbReference type="ChEBI" id="CHEBI:29105"/>
    </ligand>
</feature>
<feature type="binding site" evidence="1">
    <location>
        <position position="161"/>
    </location>
    <ligand>
        <name>Zn(2+)</name>
        <dbReference type="ChEBI" id="CHEBI:29105"/>
    </ligand>
</feature>
<feature type="binding site" evidence="1">
    <location>
        <position position="317"/>
    </location>
    <ligand>
        <name>substrate</name>
    </ligand>
</feature>
<feature type="binding site" evidence="1">
    <location>
        <begin position="357"/>
        <end position="360"/>
    </location>
    <ligand>
        <name>substrate</name>
    </ligand>
</feature>
<organism>
    <name type="scientific">Planococcus sp. (strain 'SOS Orange')</name>
    <dbReference type="NCBI Taxonomy" id="128803"/>
    <lineage>
        <taxon>Bacteria</taxon>
        <taxon>Bacillati</taxon>
        <taxon>Bacillota</taxon>
        <taxon>Bacilli</taxon>
        <taxon>Bacillales</taxon>
        <taxon>Caryophanaceae</taxon>
        <taxon>Planococcus</taxon>
    </lineage>
</organism>
<evidence type="ECO:0000250" key="1">
    <source>
        <dbReference type="UniProtKB" id="O69315"/>
    </source>
</evidence>
<evidence type="ECO:0000250" key="2">
    <source>
        <dbReference type="UniProtKB" id="P19668"/>
    </source>
</evidence>
<evidence type="ECO:0000255" key="3"/>
<evidence type="ECO:0000269" key="4">
    <source>
    </source>
</evidence>
<evidence type="ECO:0000303" key="5">
    <source>
    </source>
</evidence>
<evidence type="ECO:0000305" key="6"/>
<evidence type="ECO:0000312" key="7">
    <source>
        <dbReference type="EMBL" id="AAF75984.1"/>
    </source>
</evidence>
<protein>
    <recommendedName>
        <fullName>Beta-galactosidase BgaA</fullName>
        <shortName evidence="2">Beta-gal</shortName>
        <ecNumber>3.2.1.23</ecNumber>
    </recommendedName>
</protein>
<comment type="function">
    <text evidence="4">Hydrolyzes o-nitrophenyl-beta-D-galactopyranoside (ONPG), p-nitrophenyl-beta-D-galactopyranoside (PNPG), 5-bromo-4-chloro-3-indoyl-beta-D-galactosde (X-gal), o-nitrophenyl-beta-D-fucopyranoside (ONPF) and p-nitrophenyl-beta-D-fucopyranoside (PNPF) with greatest activity towards ONPG and PNPG and low levels of activity with ONPF and PNPF. Detectable, but very low levels of activity towards p-nitrophenyl-beta-lactose (PNPL), p-nitrophenyl-beta-cellobiose (PNPC), p-nitrophenyl-alpha-galactopyranoside (PNP-alpha-G), and p-nitrophenyl-beta-xylopyranoside (PNPX).</text>
</comment>
<comment type="catalytic activity">
    <reaction evidence="4">
        <text>Hydrolysis of terminal non-reducing beta-D-galactose residues in beta-D-galactosides.</text>
        <dbReference type="EC" id="3.2.1.23"/>
    </reaction>
</comment>
<comment type="activity regulation">
    <text evidence="4">No activity is lost during treatment with 20 or 100 mM EDTA in Z buffer for 3 hours at 0 degrees Celsius, nor is activity greatly stimulated by the addition of cations. Inhibited by 1 mM zinc and 1 mM copper, the levels of activity decrease to 10% of the untreated control. Nickel, cobalt and manganese at concentrations of 10 mM decrease enzyme activity to either 40% (for nickel and cobalt) or 60% (for manganese) of the activity in untreated controls. No change in enzyme activity in the presence of calcium and magnesium at concentrations up to 50 mM. EDTA-treated enzyme exhibits a slight increase in relative specific activity when it is assayed in the presence of 50 mM NaCl or 50 mM KCl, it does not exhibit enhanced activity at concentrations greater than 250 mM. Maintains between 20 and 40% of activity in the presence of 4 M NaCl or 4 M KCl, and it is more active in the presence of KCl than in the presence of NaCl. Retains 50% of activity in the presence of 3 M KCl or 2.5 M NaCl.</text>
</comment>
<comment type="biophysicochemical properties">
    <kinetics>
        <KM evidence="4">7.4 mM for ONPG (at 1.9 degrees Celsius and at pH 6.5)</KM>
        <KM evidence="4">4.5 mM for ONPG (at 10 degrees Celsius and at pH 6.5)</KM>
        <KM evidence="4">5.4 mM for ONPG (at 20 degrees Celsius and at pH 6.5)</KM>
        <KM evidence="4">5 mM for ONPG (at 30 degrees Celsius and at pH 6.5)</KM>
        <KM evidence="4">4.9 mM for ONPG (at 39 degrees Celsius and at pH 6.5)</KM>
        <Vmax evidence="4">63.0 umol/min/mg enzyme with ONPG as substrate (at 1.9 degrees Celsius and pH 6.5)</Vmax>
        <Vmax evidence="4">80.0 umol/min/mg enzyme with ONPG as substrate (at 10 degrees Celsius and pH 6.5)</Vmax>
        <Vmax evidence="4">223.0 umol/min/mg enzyme with ONPG as substrate (at 20 degrees Celsius and pH 6.5)</Vmax>
        <Vmax evidence="4">392.0 umol/min/mg enzyme with ONPG as substrate (at 30 degrees Celsius and pH 6.5)</Vmax>
        <Vmax evidence="4">467.0 umol/min/mg enzyme with ONPG as substrate (at 39 degrees Celsius and pH 6.5)</Vmax>
    </kinetics>
    <phDependence>
        <text evidence="4">Optimum pH is 6.5.</text>
    </phDependence>
    <temperatureDependence>
        <text evidence="4">Optimum temperature is 42 degrees Celsius. Thermostable at temperatures at or below the optimal temperature for activity, but it is rapidly denatured at temperatures above 42 degrees Celsius. Irreversibly inactivated within 10 minutes at 55 degrees Celsius. Stable during storage at 5 degrees Celsius and loses no activity during storage for 4 months. Retains 10% of activity at 0 degrees Celsius.</text>
    </temperatureDependence>
</comment>
<comment type="subunit">
    <text evidence="4">Dimer.</text>
</comment>
<comment type="biotechnology">
    <text evidence="4">Possible reporter enzyme for halotolerant and halophilic organisms. May also be used in the food industry to digest plant polysaccharides in high-salt processes.</text>
</comment>
<comment type="similarity">
    <text evidence="3">Belongs to the glycosyl hydrolase 42 family.</text>
</comment>
<proteinExistence type="evidence at protein level"/>
<sequence length="677" mass="77484">MINDKLPKIWHGGDYNPEQWDSKEIWDEDVRMFKLAGIDVATLNVFSWALNQPNEDTYNFDWLDEKINRLYENGIYTCLATSTAAHPAWMAKKYPDVLRVDFYGRKRKFGSRHNSCPNSPTYRKYSERIAETLAERYKDHPAVLIWHVSNEYGGYCYCDNCQDAFRNWLSDKYGTLEKLNKAWNTGFWGHTFYEWDEIVAPNMLSEKREDNVSDFQGISLDYRRFQSDRLLDCYKLEYNAIRKHVPTSIPITTNLMGTYPMLDYFKWAKEMDVVSWDNYPSIDTPFSYTAMTHDLMRGLKGGKPFMLMEQTPSQQNWQPYNSLKRPGVMRLWSYQAIGRGADTILYFQLRRSVGACEKYHGAVIEHVGHEHTRVFNEVAQLGQELNGLSDTLLDARVNAKVAIVFDWENRWATELSSGPSVSLDYVNEVHKYYDALYKLNVQVDMIGVEEDLSKYDVVIAPVLYMVKEGYAAKVEKFVENGGTFLTTFFSGIVNETDIVTLGGYPGELRKVLGIWAEEIDALHPDETNQIVVKGSRGILSGKYSCNLLFDLIHTEGAEAVAEYGSDFYKGMPVLTVNKFGKGKAWYVASSPDAEFLVDFLQTVCEEAGVEPLLDVPAGVETTERVKDGQTYLFVLNHNNDEVTIELHGSQYREVLTDEQVSGNLVLKEKGVLILAKV</sequence>